<evidence type="ECO:0000255" key="1">
    <source>
        <dbReference type="HAMAP-Rule" id="MF_00651"/>
    </source>
</evidence>
<evidence type="ECO:0000305" key="2"/>
<name>YQGF_LEGPH</name>
<protein>
    <recommendedName>
        <fullName evidence="1">Putative pre-16S rRNA nuclease</fullName>
        <ecNumber evidence="1">3.1.-.-</ecNumber>
    </recommendedName>
</protein>
<keyword id="KW-0963">Cytoplasm</keyword>
<keyword id="KW-0378">Hydrolase</keyword>
<keyword id="KW-0540">Nuclease</keyword>
<keyword id="KW-1185">Reference proteome</keyword>
<keyword id="KW-0690">Ribosome biogenesis</keyword>
<gene>
    <name type="ordered locus">lpg0587</name>
</gene>
<feature type="chain" id="PRO_0000172081" description="Putative pre-16S rRNA nuclease">
    <location>
        <begin position="1"/>
        <end position="139"/>
    </location>
</feature>
<proteinExistence type="inferred from homology"/>
<dbReference type="EC" id="3.1.-.-" evidence="1"/>
<dbReference type="EMBL" id="AE017354">
    <property type="protein sequence ID" value="AAU26676.1"/>
    <property type="status" value="ALT_INIT"/>
    <property type="molecule type" value="Genomic_DNA"/>
</dbReference>
<dbReference type="RefSeq" id="YP_094623.1">
    <property type="nucleotide sequence ID" value="NC_002942.5"/>
</dbReference>
<dbReference type="SMR" id="Q5ZXZ3"/>
<dbReference type="STRING" id="272624.lpg0587"/>
<dbReference type="PaxDb" id="272624-lpg0587"/>
<dbReference type="KEGG" id="lpn:lpg0587"/>
<dbReference type="PATRIC" id="fig|272624.6.peg.599"/>
<dbReference type="eggNOG" id="COG0816">
    <property type="taxonomic scope" value="Bacteria"/>
</dbReference>
<dbReference type="HOGENOM" id="CLU_098240_3_0_6"/>
<dbReference type="OrthoDB" id="9796140at2"/>
<dbReference type="Proteomes" id="UP000000609">
    <property type="component" value="Chromosome"/>
</dbReference>
<dbReference type="GO" id="GO:0005829">
    <property type="term" value="C:cytosol"/>
    <property type="evidence" value="ECO:0007669"/>
    <property type="project" value="TreeGrafter"/>
</dbReference>
<dbReference type="GO" id="GO:0004518">
    <property type="term" value="F:nuclease activity"/>
    <property type="evidence" value="ECO:0007669"/>
    <property type="project" value="UniProtKB-KW"/>
</dbReference>
<dbReference type="GO" id="GO:0000967">
    <property type="term" value="P:rRNA 5'-end processing"/>
    <property type="evidence" value="ECO:0007669"/>
    <property type="project" value="UniProtKB-UniRule"/>
</dbReference>
<dbReference type="CDD" id="cd16964">
    <property type="entry name" value="YqgF"/>
    <property type="match status" value="1"/>
</dbReference>
<dbReference type="Gene3D" id="3.30.420.140">
    <property type="entry name" value="YqgF/RNase H-like domain"/>
    <property type="match status" value="1"/>
</dbReference>
<dbReference type="HAMAP" id="MF_00651">
    <property type="entry name" value="Nuclease_YqgF"/>
    <property type="match status" value="1"/>
</dbReference>
<dbReference type="InterPro" id="IPR012337">
    <property type="entry name" value="RNaseH-like_sf"/>
</dbReference>
<dbReference type="InterPro" id="IPR005227">
    <property type="entry name" value="YqgF"/>
</dbReference>
<dbReference type="InterPro" id="IPR006641">
    <property type="entry name" value="YqgF/RNaseH-like_dom"/>
</dbReference>
<dbReference type="InterPro" id="IPR037027">
    <property type="entry name" value="YqgF/RNaseH-like_dom_sf"/>
</dbReference>
<dbReference type="NCBIfam" id="TIGR00250">
    <property type="entry name" value="RNAse_H_YqgF"/>
    <property type="match status" value="1"/>
</dbReference>
<dbReference type="PANTHER" id="PTHR33317">
    <property type="entry name" value="POLYNUCLEOTIDYL TRANSFERASE, RIBONUCLEASE H-LIKE SUPERFAMILY PROTEIN"/>
    <property type="match status" value="1"/>
</dbReference>
<dbReference type="PANTHER" id="PTHR33317:SF4">
    <property type="entry name" value="POLYNUCLEOTIDYL TRANSFERASE, RIBONUCLEASE H-LIKE SUPERFAMILY PROTEIN"/>
    <property type="match status" value="1"/>
</dbReference>
<dbReference type="Pfam" id="PF03652">
    <property type="entry name" value="RuvX"/>
    <property type="match status" value="1"/>
</dbReference>
<dbReference type="SMART" id="SM00732">
    <property type="entry name" value="YqgFc"/>
    <property type="match status" value="1"/>
</dbReference>
<dbReference type="SUPFAM" id="SSF53098">
    <property type="entry name" value="Ribonuclease H-like"/>
    <property type="match status" value="1"/>
</dbReference>
<comment type="function">
    <text evidence="1">Could be a nuclease involved in processing of the 5'-end of pre-16S rRNA.</text>
</comment>
<comment type="subcellular location">
    <subcellularLocation>
        <location evidence="1">Cytoplasm</location>
    </subcellularLocation>
</comment>
<comment type="similarity">
    <text evidence="1">Belongs to the YqgF nuclease family.</text>
</comment>
<comment type="sequence caution" evidence="2">
    <conflict type="erroneous initiation">
        <sequence resource="EMBL-CDS" id="AAU26676"/>
    </conflict>
    <text>Extended N-terminus.</text>
</comment>
<organism>
    <name type="scientific">Legionella pneumophila subsp. pneumophila (strain Philadelphia 1 / ATCC 33152 / DSM 7513)</name>
    <dbReference type="NCBI Taxonomy" id="272624"/>
    <lineage>
        <taxon>Bacteria</taxon>
        <taxon>Pseudomonadati</taxon>
        <taxon>Pseudomonadota</taxon>
        <taxon>Gammaproteobacteria</taxon>
        <taxon>Legionellales</taxon>
        <taxon>Legionellaceae</taxon>
        <taxon>Legionella</taxon>
    </lineage>
</organism>
<accession>Q5ZXZ3</accession>
<sequence>MPRGVYLGFDFGYKRIGVAVGQRLTCSASPLSTIEAKAGIPDWNTIQKVITQWNPQALIVGLPTCIDDRELYTTSAARRFAKQLHKRFSLPVHLVDERLSTVEARGYLFEQGGYRQIKKAEVDSIAACVILEQWLQQSE</sequence>
<reference key="1">
    <citation type="journal article" date="2004" name="Science">
        <title>The genomic sequence of the accidental pathogen Legionella pneumophila.</title>
        <authorList>
            <person name="Chien M."/>
            <person name="Morozova I."/>
            <person name="Shi S."/>
            <person name="Sheng H."/>
            <person name="Chen J."/>
            <person name="Gomez S.M."/>
            <person name="Asamani G."/>
            <person name="Hill K."/>
            <person name="Nuara J."/>
            <person name="Feder M."/>
            <person name="Rineer J."/>
            <person name="Greenberg J.J."/>
            <person name="Steshenko V."/>
            <person name="Park S.H."/>
            <person name="Zhao B."/>
            <person name="Teplitskaya E."/>
            <person name="Edwards J.R."/>
            <person name="Pampou S."/>
            <person name="Georghiou A."/>
            <person name="Chou I.-C."/>
            <person name="Iannuccilli W."/>
            <person name="Ulz M.E."/>
            <person name="Kim D.H."/>
            <person name="Geringer-Sameth A."/>
            <person name="Goldsberry C."/>
            <person name="Morozov P."/>
            <person name="Fischer S.G."/>
            <person name="Segal G."/>
            <person name="Qu X."/>
            <person name="Rzhetsky A."/>
            <person name="Zhang P."/>
            <person name="Cayanis E."/>
            <person name="De Jong P.J."/>
            <person name="Ju J."/>
            <person name="Kalachikov S."/>
            <person name="Shuman H.A."/>
            <person name="Russo J.J."/>
        </authorList>
    </citation>
    <scope>NUCLEOTIDE SEQUENCE [LARGE SCALE GENOMIC DNA]</scope>
    <source>
        <strain>Philadelphia 1 / ATCC 33152 / DSM 7513</strain>
    </source>
</reference>